<name>CA074_HUMAN</name>
<dbReference type="EMBL" id="AK057807">
    <property type="protein sequence ID" value="BAB71584.1"/>
    <property type="molecule type" value="mRNA"/>
</dbReference>
<dbReference type="EMBL" id="AL022398">
    <property type="status" value="NOT_ANNOTATED_CDS"/>
    <property type="molecule type" value="Genomic_DNA"/>
</dbReference>
<dbReference type="EMBL" id="BC039719">
    <property type="protein sequence ID" value="AAH39719.1"/>
    <property type="molecule type" value="mRNA"/>
</dbReference>
<dbReference type="CCDS" id="CCDS1491.1"/>
<dbReference type="RefSeq" id="NP_689698.1">
    <property type="nucleotide sequence ID" value="NM_152485.4"/>
</dbReference>
<dbReference type="BioGRID" id="127141">
    <property type="interactions" value="18"/>
</dbReference>
<dbReference type="FunCoup" id="Q96LT6">
    <property type="interactions" value="379"/>
</dbReference>
<dbReference type="IntAct" id="Q96LT6">
    <property type="interactions" value="12"/>
</dbReference>
<dbReference type="STRING" id="9606.ENSP00000294811"/>
<dbReference type="GlyCosmos" id="Q96LT6">
    <property type="glycosylation" value="1 site, 1 glycan"/>
</dbReference>
<dbReference type="GlyGen" id="Q96LT6">
    <property type="glycosylation" value="1 site, 1 O-linked glycan (1 site)"/>
</dbReference>
<dbReference type="iPTMnet" id="Q96LT6"/>
<dbReference type="BioMuta" id="C1orf74"/>
<dbReference type="MassIVE" id="Q96LT6"/>
<dbReference type="PaxDb" id="9606-ENSP00000294811"/>
<dbReference type="PeptideAtlas" id="Q96LT6"/>
<dbReference type="ProteomicsDB" id="77247"/>
<dbReference type="Antibodypedia" id="34597">
    <property type="antibodies" value="58 antibodies from 14 providers"/>
</dbReference>
<dbReference type="DNASU" id="148304"/>
<dbReference type="Ensembl" id="ENST00000294811.2">
    <property type="protein sequence ID" value="ENSP00000294811.1"/>
    <property type="gene ID" value="ENSG00000162757.4"/>
</dbReference>
<dbReference type="GeneID" id="148304"/>
<dbReference type="KEGG" id="hsa:148304"/>
<dbReference type="MANE-Select" id="ENST00000294811.2">
    <property type="protein sequence ID" value="ENSP00000294811.1"/>
    <property type="RefSeq nucleotide sequence ID" value="NM_152485.4"/>
    <property type="RefSeq protein sequence ID" value="NP_689698.1"/>
</dbReference>
<dbReference type="UCSC" id="uc001hhp.2">
    <property type="organism name" value="human"/>
</dbReference>
<dbReference type="AGR" id="HGNC:26319"/>
<dbReference type="CTD" id="148304"/>
<dbReference type="DisGeNET" id="148304"/>
<dbReference type="GeneCards" id="C1orf74"/>
<dbReference type="HGNC" id="HGNC:26319">
    <property type="gene designation" value="C1orf74"/>
</dbReference>
<dbReference type="HPA" id="ENSG00000162757">
    <property type="expression patterns" value="Tissue enhanced (skin)"/>
</dbReference>
<dbReference type="neXtProt" id="NX_Q96LT6"/>
<dbReference type="OpenTargets" id="ENSG00000162757"/>
<dbReference type="PharmGKB" id="PA142672523"/>
<dbReference type="VEuPathDB" id="HostDB:ENSG00000162757"/>
<dbReference type="eggNOG" id="ENOG502RZ46">
    <property type="taxonomic scope" value="Eukaryota"/>
</dbReference>
<dbReference type="GeneTree" id="ENSGT00390000002240"/>
<dbReference type="HOGENOM" id="CLU_1156081_0_0_1"/>
<dbReference type="InParanoid" id="Q96LT6"/>
<dbReference type="OMA" id="YPVTYWF"/>
<dbReference type="OrthoDB" id="10056365at2759"/>
<dbReference type="PAN-GO" id="Q96LT6">
    <property type="GO annotations" value="0 GO annotations based on evolutionary models"/>
</dbReference>
<dbReference type="PhylomeDB" id="Q96LT6"/>
<dbReference type="TreeFam" id="TF328609"/>
<dbReference type="PathwayCommons" id="Q96LT6"/>
<dbReference type="SignaLink" id="Q96LT6"/>
<dbReference type="BioGRID-ORCS" id="148304">
    <property type="hits" value="55 hits in 1043 CRISPR screens"/>
</dbReference>
<dbReference type="ChiTaRS" id="C1orf74">
    <property type="organism name" value="human"/>
</dbReference>
<dbReference type="GenomeRNAi" id="148304"/>
<dbReference type="Pharos" id="Q96LT6">
    <property type="development level" value="Tdark"/>
</dbReference>
<dbReference type="PRO" id="PR:Q96LT6"/>
<dbReference type="Proteomes" id="UP000005640">
    <property type="component" value="Chromosome 1"/>
</dbReference>
<dbReference type="RNAct" id="Q96LT6">
    <property type="molecule type" value="protein"/>
</dbReference>
<dbReference type="Bgee" id="ENSG00000162757">
    <property type="expression patterns" value="Expressed in granulocyte and 129 other cell types or tissues"/>
</dbReference>
<dbReference type="ExpressionAtlas" id="Q96LT6">
    <property type="expression patterns" value="baseline and differential"/>
</dbReference>
<dbReference type="InterPro" id="IPR027850">
    <property type="entry name" value="DUF4504"/>
</dbReference>
<dbReference type="PANTHER" id="PTHR31366">
    <property type="entry name" value="UPF0739 PROTEIN C1ORF74"/>
    <property type="match status" value="1"/>
</dbReference>
<dbReference type="PANTHER" id="PTHR31366:SF2">
    <property type="entry name" value="UPF0739 PROTEIN C1ORF74"/>
    <property type="match status" value="1"/>
</dbReference>
<dbReference type="Pfam" id="PF14953">
    <property type="entry name" value="DUF4504"/>
    <property type="match status" value="1"/>
</dbReference>
<comment type="interaction">
    <interactant intactId="EBI-12049899">
        <id>Q96LT6</id>
    </interactant>
    <interactant intactId="EBI-10303102">
        <id>Q9BZE7</id>
        <label>C22orf23</label>
    </interactant>
    <organismsDiffer>false</organismsDiffer>
    <experiments>3</experiments>
</comment>
<comment type="interaction">
    <interactant intactId="EBI-12049899">
        <id>Q96LT6</id>
    </interactant>
    <interactant intactId="EBI-947015">
        <id>P24592</id>
        <label>IGFBP6</label>
    </interactant>
    <organismsDiffer>false</organismsDiffer>
    <experiments>3</experiments>
</comment>
<comment type="interaction">
    <interactant intactId="EBI-12049899">
        <id>Q96LT6</id>
    </interactant>
    <interactant intactId="EBI-12516603">
        <id>Q8WWY6</id>
        <label>MBD3L1</label>
    </interactant>
    <organismsDiffer>false</organismsDiffer>
    <experiments>3</experiments>
</comment>
<comment type="interaction">
    <interactant intactId="EBI-12049899">
        <id>Q96LT6</id>
    </interactant>
    <interactant intactId="EBI-10829018">
        <id>Q04864-2</id>
        <label>REL</label>
    </interactant>
    <organismsDiffer>false</organismsDiffer>
    <experiments>3</experiments>
</comment>
<comment type="interaction">
    <interactant intactId="EBI-12049899">
        <id>Q96LT6</id>
    </interactant>
    <interactant intactId="EBI-10180409">
        <id>Q969V4</id>
        <label>TEKT1</label>
    </interactant>
    <organismsDiffer>false</organismsDiffer>
    <experiments>3</experiments>
</comment>
<comment type="interaction">
    <interactant intactId="EBI-12049899">
        <id>Q96LT6</id>
    </interactant>
    <interactant intactId="EBI-747743">
        <id>Q9GZV5</id>
        <label>WWTR1</label>
    </interactant>
    <organismsDiffer>false</organismsDiffer>
    <experiments>3</experiments>
</comment>
<comment type="similarity">
    <text evidence="1">Belongs to the UPF0739 family.</text>
</comment>
<comment type="caution">
    <text evidence="1">It is uncertain whether Met-1 or Met-7 is the initiator.</text>
</comment>
<feature type="chain" id="PRO_0000271092" description="UPF0739 protein C1orf74">
    <location>
        <begin position="1"/>
        <end position="269"/>
    </location>
</feature>
<feature type="sequence variant" id="VAR_050701" description="In dbSNP:rs7550857.">
    <original>L</original>
    <variation>F</variation>
    <location>
        <position position="146"/>
    </location>
</feature>
<sequence>MLLLDLMSSPSPQLLVAAAQQTLGMGKRRSPPQAICLHLAGEVLAVARGLKPAVLYDCNCAGASELQSYLEELKGLGFLTFGLHILEIGENSLIVSPEHVCQHLEQVLLGTIAFVDVSSCQRHPSVCSLDQLQDLKALVAEIITHLQGLQRDLSLAVSYSRLHSSDWNLCTVFGILLGYPVPYTFHLNQGDDNCLALTPLRVFTARISWLLGQPPILLYSFSVPESLFPGLRDILNTWEKDLRTRFRTQNDFADLSISSEIVTLPAVAL</sequence>
<organism>
    <name type="scientific">Homo sapiens</name>
    <name type="common">Human</name>
    <dbReference type="NCBI Taxonomy" id="9606"/>
    <lineage>
        <taxon>Eukaryota</taxon>
        <taxon>Metazoa</taxon>
        <taxon>Chordata</taxon>
        <taxon>Craniata</taxon>
        <taxon>Vertebrata</taxon>
        <taxon>Euteleostomi</taxon>
        <taxon>Mammalia</taxon>
        <taxon>Eutheria</taxon>
        <taxon>Euarchontoglires</taxon>
        <taxon>Primates</taxon>
        <taxon>Haplorrhini</taxon>
        <taxon>Catarrhini</taxon>
        <taxon>Hominidae</taxon>
        <taxon>Homo</taxon>
    </lineage>
</organism>
<keyword id="KW-1267">Proteomics identification</keyword>
<keyword id="KW-1185">Reference proteome</keyword>
<reference key="1">
    <citation type="journal article" date="2004" name="Nat. Genet.">
        <title>Complete sequencing and characterization of 21,243 full-length human cDNAs.</title>
        <authorList>
            <person name="Ota T."/>
            <person name="Suzuki Y."/>
            <person name="Nishikawa T."/>
            <person name="Otsuki T."/>
            <person name="Sugiyama T."/>
            <person name="Irie R."/>
            <person name="Wakamatsu A."/>
            <person name="Hayashi K."/>
            <person name="Sato H."/>
            <person name="Nagai K."/>
            <person name="Kimura K."/>
            <person name="Makita H."/>
            <person name="Sekine M."/>
            <person name="Obayashi M."/>
            <person name="Nishi T."/>
            <person name="Shibahara T."/>
            <person name="Tanaka T."/>
            <person name="Ishii S."/>
            <person name="Yamamoto J."/>
            <person name="Saito K."/>
            <person name="Kawai Y."/>
            <person name="Isono Y."/>
            <person name="Nakamura Y."/>
            <person name="Nagahari K."/>
            <person name="Murakami K."/>
            <person name="Yasuda T."/>
            <person name="Iwayanagi T."/>
            <person name="Wagatsuma M."/>
            <person name="Shiratori A."/>
            <person name="Sudo H."/>
            <person name="Hosoiri T."/>
            <person name="Kaku Y."/>
            <person name="Kodaira H."/>
            <person name="Kondo H."/>
            <person name="Sugawara M."/>
            <person name="Takahashi M."/>
            <person name="Kanda K."/>
            <person name="Yokoi T."/>
            <person name="Furuya T."/>
            <person name="Kikkawa E."/>
            <person name="Omura Y."/>
            <person name="Abe K."/>
            <person name="Kamihara K."/>
            <person name="Katsuta N."/>
            <person name="Sato K."/>
            <person name="Tanikawa M."/>
            <person name="Yamazaki M."/>
            <person name="Ninomiya K."/>
            <person name="Ishibashi T."/>
            <person name="Yamashita H."/>
            <person name="Murakawa K."/>
            <person name="Fujimori K."/>
            <person name="Tanai H."/>
            <person name="Kimata M."/>
            <person name="Watanabe M."/>
            <person name="Hiraoka S."/>
            <person name="Chiba Y."/>
            <person name="Ishida S."/>
            <person name="Ono Y."/>
            <person name="Takiguchi S."/>
            <person name="Watanabe S."/>
            <person name="Yosida M."/>
            <person name="Hotuta T."/>
            <person name="Kusano J."/>
            <person name="Kanehori K."/>
            <person name="Takahashi-Fujii A."/>
            <person name="Hara H."/>
            <person name="Tanase T.-O."/>
            <person name="Nomura Y."/>
            <person name="Togiya S."/>
            <person name="Komai F."/>
            <person name="Hara R."/>
            <person name="Takeuchi K."/>
            <person name="Arita M."/>
            <person name="Imose N."/>
            <person name="Musashino K."/>
            <person name="Yuuki H."/>
            <person name="Oshima A."/>
            <person name="Sasaki N."/>
            <person name="Aotsuka S."/>
            <person name="Yoshikawa Y."/>
            <person name="Matsunawa H."/>
            <person name="Ichihara T."/>
            <person name="Shiohata N."/>
            <person name="Sano S."/>
            <person name="Moriya S."/>
            <person name="Momiyama H."/>
            <person name="Satoh N."/>
            <person name="Takami S."/>
            <person name="Terashima Y."/>
            <person name="Suzuki O."/>
            <person name="Nakagawa S."/>
            <person name="Senoh A."/>
            <person name="Mizoguchi H."/>
            <person name="Goto Y."/>
            <person name="Shimizu F."/>
            <person name="Wakebe H."/>
            <person name="Hishigaki H."/>
            <person name="Watanabe T."/>
            <person name="Sugiyama A."/>
            <person name="Takemoto M."/>
            <person name="Kawakami B."/>
            <person name="Yamazaki M."/>
            <person name="Watanabe K."/>
            <person name="Kumagai A."/>
            <person name="Itakura S."/>
            <person name="Fukuzumi Y."/>
            <person name="Fujimori Y."/>
            <person name="Komiyama M."/>
            <person name="Tashiro H."/>
            <person name="Tanigami A."/>
            <person name="Fujiwara T."/>
            <person name="Ono T."/>
            <person name="Yamada K."/>
            <person name="Fujii Y."/>
            <person name="Ozaki K."/>
            <person name="Hirao M."/>
            <person name="Ohmori Y."/>
            <person name="Kawabata A."/>
            <person name="Hikiji T."/>
            <person name="Kobatake N."/>
            <person name="Inagaki H."/>
            <person name="Ikema Y."/>
            <person name="Okamoto S."/>
            <person name="Okitani R."/>
            <person name="Kawakami T."/>
            <person name="Noguchi S."/>
            <person name="Itoh T."/>
            <person name="Shigeta K."/>
            <person name="Senba T."/>
            <person name="Matsumura K."/>
            <person name="Nakajima Y."/>
            <person name="Mizuno T."/>
            <person name="Morinaga M."/>
            <person name="Sasaki M."/>
            <person name="Togashi T."/>
            <person name="Oyama M."/>
            <person name="Hata H."/>
            <person name="Watanabe M."/>
            <person name="Komatsu T."/>
            <person name="Mizushima-Sugano J."/>
            <person name="Satoh T."/>
            <person name="Shirai Y."/>
            <person name="Takahashi Y."/>
            <person name="Nakagawa K."/>
            <person name="Okumura K."/>
            <person name="Nagase T."/>
            <person name="Nomura N."/>
            <person name="Kikuchi H."/>
            <person name="Masuho Y."/>
            <person name="Yamashita R."/>
            <person name="Nakai K."/>
            <person name="Yada T."/>
            <person name="Nakamura Y."/>
            <person name="Ohara O."/>
            <person name="Isogai T."/>
            <person name="Sugano S."/>
        </authorList>
    </citation>
    <scope>NUCLEOTIDE SEQUENCE [LARGE SCALE MRNA]</scope>
    <source>
        <tissue>Cerebellum</tissue>
    </source>
</reference>
<reference key="2">
    <citation type="journal article" date="2006" name="Nature">
        <title>The DNA sequence and biological annotation of human chromosome 1.</title>
        <authorList>
            <person name="Gregory S.G."/>
            <person name="Barlow K.F."/>
            <person name="McLay K.E."/>
            <person name="Kaul R."/>
            <person name="Swarbreck D."/>
            <person name="Dunham A."/>
            <person name="Scott C.E."/>
            <person name="Howe K.L."/>
            <person name="Woodfine K."/>
            <person name="Spencer C.C.A."/>
            <person name="Jones M.C."/>
            <person name="Gillson C."/>
            <person name="Searle S."/>
            <person name="Zhou Y."/>
            <person name="Kokocinski F."/>
            <person name="McDonald L."/>
            <person name="Evans R."/>
            <person name="Phillips K."/>
            <person name="Atkinson A."/>
            <person name="Cooper R."/>
            <person name="Jones C."/>
            <person name="Hall R.E."/>
            <person name="Andrews T.D."/>
            <person name="Lloyd C."/>
            <person name="Ainscough R."/>
            <person name="Almeida J.P."/>
            <person name="Ambrose K.D."/>
            <person name="Anderson F."/>
            <person name="Andrew R.W."/>
            <person name="Ashwell R.I.S."/>
            <person name="Aubin K."/>
            <person name="Babbage A.K."/>
            <person name="Bagguley C.L."/>
            <person name="Bailey J."/>
            <person name="Beasley H."/>
            <person name="Bethel G."/>
            <person name="Bird C.P."/>
            <person name="Bray-Allen S."/>
            <person name="Brown J.Y."/>
            <person name="Brown A.J."/>
            <person name="Buckley D."/>
            <person name="Burton J."/>
            <person name="Bye J."/>
            <person name="Carder C."/>
            <person name="Chapman J.C."/>
            <person name="Clark S.Y."/>
            <person name="Clarke G."/>
            <person name="Clee C."/>
            <person name="Cobley V."/>
            <person name="Collier R.E."/>
            <person name="Corby N."/>
            <person name="Coville G.J."/>
            <person name="Davies J."/>
            <person name="Deadman R."/>
            <person name="Dunn M."/>
            <person name="Earthrowl M."/>
            <person name="Ellington A.G."/>
            <person name="Errington H."/>
            <person name="Frankish A."/>
            <person name="Frankland J."/>
            <person name="French L."/>
            <person name="Garner P."/>
            <person name="Garnett J."/>
            <person name="Gay L."/>
            <person name="Ghori M.R.J."/>
            <person name="Gibson R."/>
            <person name="Gilby L.M."/>
            <person name="Gillett W."/>
            <person name="Glithero R.J."/>
            <person name="Grafham D.V."/>
            <person name="Griffiths C."/>
            <person name="Griffiths-Jones S."/>
            <person name="Grocock R."/>
            <person name="Hammond S."/>
            <person name="Harrison E.S.I."/>
            <person name="Hart E."/>
            <person name="Haugen E."/>
            <person name="Heath P.D."/>
            <person name="Holmes S."/>
            <person name="Holt K."/>
            <person name="Howden P.J."/>
            <person name="Hunt A.R."/>
            <person name="Hunt S.E."/>
            <person name="Hunter G."/>
            <person name="Isherwood J."/>
            <person name="James R."/>
            <person name="Johnson C."/>
            <person name="Johnson D."/>
            <person name="Joy A."/>
            <person name="Kay M."/>
            <person name="Kershaw J.K."/>
            <person name="Kibukawa M."/>
            <person name="Kimberley A.M."/>
            <person name="King A."/>
            <person name="Knights A.J."/>
            <person name="Lad H."/>
            <person name="Laird G."/>
            <person name="Lawlor S."/>
            <person name="Leongamornlert D.A."/>
            <person name="Lloyd D.M."/>
            <person name="Loveland J."/>
            <person name="Lovell J."/>
            <person name="Lush M.J."/>
            <person name="Lyne R."/>
            <person name="Martin S."/>
            <person name="Mashreghi-Mohammadi M."/>
            <person name="Matthews L."/>
            <person name="Matthews N.S.W."/>
            <person name="McLaren S."/>
            <person name="Milne S."/>
            <person name="Mistry S."/>
            <person name="Moore M.J.F."/>
            <person name="Nickerson T."/>
            <person name="O'Dell C.N."/>
            <person name="Oliver K."/>
            <person name="Palmeiri A."/>
            <person name="Palmer S.A."/>
            <person name="Parker A."/>
            <person name="Patel D."/>
            <person name="Pearce A.V."/>
            <person name="Peck A.I."/>
            <person name="Pelan S."/>
            <person name="Phelps K."/>
            <person name="Phillimore B.J."/>
            <person name="Plumb R."/>
            <person name="Rajan J."/>
            <person name="Raymond C."/>
            <person name="Rouse G."/>
            <person name="Saenphimmachak C."/>
            <person name="Sehra H.K."/>
            <person name="Sheridan E."/>
            <person name="Shownkeen R."/>
            <person name="Sims S."/>
            <person name="Skuce C.D."/>
            <person name="Smith M."/>
            <person name="Steward C."/>
            <person name="Subramanian S."/>
            <person name="Sycamore N."/>
            <person name="Tracey A."/>
            <person name="Tromans A."/>
            <person name="Van Helmond Z."/>
            <person name="Wall M."/>
            <person name="Wallis J.M."/>
            <person name="White S."/>
            <person name="Whitehead S.L."/>
            <person name="Wilkinson J.E."/>
            <person name="Willey D.L."/>
            <person name="Williams H."/>
            <person name="Wilming L."/>
            <person name="Wray P.W."/>
            <person name="Wu Z."/>
            <person name="Coulson A."/>
            <person name="Vaudin M."/>
            <person name="Sulston J.E."/>
            <person name="Durbin R.M."/>
            <person name="Hubbard T."/>
            <person name="Wooster R."/>
            <person name="Dunham I."/>
            <person name="Carter N.P."/>
            <person name="McVean G."/>
            <person name="Ross M.T."/>
            <person name="Harrow J."/>
            <person name="Olson M.V."/>
            <person name="Beck S."/>
            <person name="Rogers J."/>
            <person name="Bentley D.R."/>
        </authorList>
    </citation>
    <scope>NUCLEOTIDE SEQUENCE [LARGE SCALE GENOMIC DNA]</scope>
</reference>
<reference key="3">
    <citation type="journal article" date="2004" name="Genome Res.">
        <title>The status, quality, and expansion of the NIH full-length cDNA project: the Mammalian Gene Collection (MGC).</title>
        <authorList>
            <consortium name="The MGC Project Team"/>
        </authorList>
    </citation>
    <scope>NUCLEOTIDE SEQUENCE [LARGE SCALE MRNA]</scope>
    <source>
        <tissue>Brain</tissue>
    </source>
</reference>
<gene>
    <name type="primary">C1orf74</name>
</gene>
<accession>Q96LT6</accession>
<proteinExistence type="evidence at protein level"/>
<evidence type="ECO:0000305" key="1"/>
<protein>
    <recommendedName>
        <fullName>UPF0739 protein C1orf74</fullName>
    </recommendedName>
</protein>